<sequence>MTTRAIYPGTFDPITNGHLDIITRAASMFDELILAVAASPHKKTMFSLDERVALAQQAAAHLQNVSVTGFSDLMANFAQAQQGNVLVRGLRTAGDFEYEMQLAHMNRHLMPTLESVFLMPSKEWSFISSSLVKEVARHQGDVSHFLPAHVHQALLEKLR</sequence>
<proteinExistence type="inferred from homology"/>
<protein>
    <recommendedName>
        <fullName evidence="1">Phosphopantetheine adenylyltransferase</fullName>
        <ecNumber evidence="1">2.7.7.3</ecNumber>
    </recommendedName>
    <alternativeName>
        <fullName evidence="1">Dephospho-CoA pyrophosphorylase</fullName>
    </alternativeName>
    <alternativeName>
        <fullName evidence="1">Pantetheine-phosphate adenylyltransferase</fullName>
        <shortName evidence="1">PPAT</shortName>
    </alternativeName>
</protein>
<comment type="function">
    <text evidence="1">Reversibly transfers an adenylyl group from ATP to 4'-phosphopantetheine, yielding dephospho-CoA (dPCoA) and pyrophosphate.</text>
</comment>
<comment type="catalytic activity">
    <reaction evidence="1">
        <text>(R)-4'-phosphopantetheine + ATP + H(+) = 3'-dephospho-CoA + diphosphate</text>
        <dbReference type="Rhea" id="RHEA:19801"/>
        <dbReference type="ChEBI" id="CHEBI:15378"/>
        <dbReference type="ChEBI" id="CHEBI:30616"/>
        <dbReference type="ChEBI" id="CHEBI:33019"/>
        <dbReference type="ChEBI" id="CHEBI:57328"/>
        <dbReference type="ChEBI" id="CHEBI:61723"/>
        <dbReference type="EC" id="2.7.7.3"/>
    </reaction>
</comment>
<comment type="cofactor">
    <cofactor evidence="1">
        <name>Mg(2+)</name>
        <dbReference type="ChEBI" id="CHEBI:18420"/>
    </cofactor>
</comment>
<comment type="pathway">
    <text evidence="1">Cofactor biosynthesis; coenzyme A biosynthesis; CoA from (R)-pantothenate: step 4/5.</text>
</comment>
<comment type="subunit">
    <text evidence="1">Homohexamer.</text>
</comment>
<comment type="subcellular location">
    <subcellularLocation>
        <location evidence="1">Cytoplasm</location>
    </subcellularLocation>
</comment>
<comment type="similarity">
    <text evidence="1">Belongs to the bacterial CoaD family.</text>
</comment>
<reference key="1">
    <citation type="journal article" date="2010" name="PLoS ONE">
        <title>Genome sequence of Cronobacter sakazakii BAA-894 and comparative genomic hybridization analysis with other Cronobacter species.</title>
        <authorList>
            <person name="Kucerova E."/>
            <person name="Clifton S.W."/>
            <person name="Xia X.Q."/>
            <person name="Long F."/>
            <person name="Porwollik S."/>
            <person name="Fulton L."/>
            <person name="Fronick C."/>
            <person name="Minx P."/>
            <person name="Kyung K."/>
            <person name="Warren W."/>
            <person name="Fulton R."/>
            <person name="Feng D."/>
            <person name="Wollam A."/>
            <person name="Shah N."/>
            <person name="Bhonagiri V."/>
            <person name="Nash W.E."/>
            <person name="Hallsworth-Pepin K."/>
            <person name="Wilson R.K."/>
            <person name="McClelland M."/>
            <person name="Forsythe S.J."/>
        </authorList>
    </citation>
    <scope>NUCLEOTIDE SEQUENCE [LARGE SCALE GENOMIC DNA]</scope>
    <source>
        <strain>ATCC BAA-894</strain>
    </source>
</reference>
<accession>A7MQ98</accession>
<keyword id="KW-0067">ATP-binding</keyword>
<keyword id="KW-0173">Coenzyme A biosynthesis</keyword>
<keyword id="KW-0963">Cytoplasm</keyword>
<keyword id="KW-0460">Magnesium</keyword>
<keyword id="KW-0547">Nucleotide-binding</keyword>
<keyword id="KW-0548">Nucleotidyltransferase</keyword>
<keyword id="KW-1185">Reference proteome</keyword>
<keyword id="KW-0808">Transferase</keyword>
<evidence type="ECO:0000255" key="1">
    <source>
        <dbReference type="HAMAP-Rule" id="MF_00151"/>
    </source>
</evidence>
<dbReference type="EC" id="2.7.7.3" evidence="1"/>
<dbReference type="EMBL" id="CP000783">
    <property type="protein sequence ID" value="ABU79278.1"/>
    <property type="molecule type" value="Genomic_DNA"/>
</dbReference>
<dbReference type="RefSeq" id="WP_012126244.1">
    <property type="nucleotide sequence ID" value="NC_009778.1"/>
</dbReference>
<dbReference type="SMR" id="A7MQ98"/>
<dbReference type="KEGG" id="esa:ESA_04097"/>
<dbReference type="PATRIC" id="fig|290339.8.peg.3639"/>
<dbReference type="HOGENOM" id="CLU_100149_0_1_6"/>
<dbReference type="UniPathway" id="UPA00241">
    <property type="reaction ID" value="UER00355"/>
</dbReference>
<dbReference type="Proteomes" id="UP000000260">
    <property type="component" value="Chromosome"/>
</dbReference>
<dbReference type="GO" id="GO:0005737">
    <property type="term" value="C:cytoplasm"/>
    <property type="evidence" value="ECO:0007669"/>
    <property type="project" value="UniProtKB-SubCell"/>
</dbReference>
<dbReference type="GO" id="GO:0005524">
    <property type="term" value="F:ATP binding"/>
    <property type="evidence" value="ECO:0007669"/>
    <property type="project" value="UniProtKB-KW"/>
</dbReference>
<dbReference type="GO" id="GO:0004595">
    <property type="term" value="F:pantetheine-phosphate adenylyltransferase activity"/>
    <property type="evidence" value="ECO:0007669"/>
    <property type="project" value="UniProtKB-UniRule"/>
</dbReference>
<dbReference type="GO" id="GO:0015937">
    <property type="term" value="P:coenzyme A biosynthetic process"/>
    <property type="evidence" value="ECO:0007669"/>
    <property type="project" value="UniProtKB-UniRule"/>
</dbReference>
<dbReference type="CDD" id="cd02163">
    <property type="entry name" value="PPAT"/>
    <property type="match status" value="1"/>
</dbReference>
<dbReference type="FunFam" id="3.40.50.620:FF:000012">
    <property type="entry name" value="Phosphopantetheine adenylyltransferase"/>
    <property type="match status" value="1"/>
</dbReference>
<dbReference type="Gene3D" id="3.40.50.620">
    <property type="entry name" value="HUPs"/>
    <property type="match status" value="1"/>
</dbReference>
<dbReference type="HAMAP" id="MF_00151">
    <property type="entry name" value="PPAT_bact"/>
    <property type="match status" value="1"/>
</dbReference>
<dbReference type="InterPro" id="IPR004821">
    <property type="entry name" value="Cyt_trans-like"/>
</dbReference>
<dbReference type="InterPro" id="IPR001980">
    <property type="entry name" value="PPAT"/>
</dbReference>
<dbReference type="InterPro" id="IPR014729">
    <property type="entry name" value="Rossmann-like_a/b/a_fold"/>
</dbReference>
<dbReference type="NCBIfam" id="TIGR01510">
    <property type="entry name" value="coaD_prev_kdtB"/>
    <property type="match status" value="1"/>
</dbReference>
<dbReference type="NCBIfam" id="TIGR00125">
    <property type="entry name" value="cyt_tran_rel"/>
    <property type="match status" value="1"/>
</dbReference>
<dbReference type="PANTHER" id="PTHR21342">
    <property type="entry name" value="PHOSPHOPANTETHEINE ADENYLYLTRANSFERASE"/>
    <property type="match status" value="1"/>
</dbReference>
<dbReference type="PANTHER" id="PTHR21342:SF1">
    <property type="entry name" value="PHOSPHOPANTETHEINE ADENYLYLTRANSFERASE"/>
    <property type="match status" value="1"/>
</dbReference>
<dbReference type="Pfam" id="PF01467">
    <property type="entry name" value="CTP_transf_like"/>
    <property type="match status" value="1"/>
</dbReference>
<dbReference type="PRINTS" id="PR01020">
    <property type="entry name" value="LPSBIOSNTHSS"/>
</dbReference>
<dbReference type="SUPFAM" id="SSF52374">
    <property type="entry name" value="Nucleotidylyl transferase"/>
    <property type="match status" value="1"/>
</dbReference>
<name>COAD_CROS8</name>
<organism>
    <name type="scientific">Cronobacter sakazakii (strain ATCC BAA-894)</name>
    <name type="common">Enterobacter sakazakii</name>
    <dbReference type="NCBI Taxonomy" id="290339"/>
    <lineage>
        <taxon>Bacteria</taxon>
        <taxon>Pseudomonadati</taxon>
        <taxon>Pseudomonadota</taxon>
        <taxon>Gammaproteobacteria</taxon>
        <taxon>Enterobacterales</taxon>
        <taxon>Enterobacteriaceae</taxon>
        <taxon>Cronobacter</taxon>
    </lineage>
</organism>
<gene>
    <name evidence="1" type="primary">coaD</name>
    <name type="ordered locus">ESA_04097</name>
</gene>
<feature type="chain" id="PRO_1000011141" description="Phosphopantetheine adenylyltransferase">
    <location>
        <begin position="1"/>
        <end position="159"/>
    </location>
</feature>
<feature type="binding site" evidence="1">
    <location>
        <begin position="10"/>
        <end position="11"/>
    </location>
    <ligand>
        <name>ATP</name>
        <dbReference type="ChEBI" id="CHEBI:30616"/>
    </ligand>
</feature>
<feature type="binding site" evidence="1">
    <location>
        <position position="10"/>
    </location>
    <ligand>
        <name>substrate</name>
    </ligand>
</feature>
<feature type="binding site" evidence="1">
    <location>
        <position position="18"/>
    </location>
    <ligand>
        <name>ATP</name>
        <dbReference type="ChEBI" id="CHEBI:30616"/>
    </ligand>
</feature>
<feature type="binding site" evidence="1">
    <location>
        <position position="42"/>
    </location>
    <ligand>
        <name>substrate</name>
    </ligand>
</feature>
<feature type="binding site" evidence="1">
    <location>
        <position position="74"/>
    </location>
    <ligand>
        <name>substrate</name>
    </ligand>
</feature>
<feature type="binding site" evidence="1">
    <location>
        <position position="88"/>
    </location>
    <ligand>
        <name>substrate</name>
    </ligand>
</feature>
<feature type="binding site" evidence="1">
    <location>
        <begin position="89"/>
        <end position="91"/>
    </location>
    <ligand>
        <name>ATP</name>
        <dbReference type="ChEBI" id="CHEBI:30616"/>
    </ligand>
</feature>
<feature type="binding site" evidence="1">
    <location>
        <position position="99"/>
    </location>
    <ligand>
        <name>ATP</name>
        <dbReference type="ChEBI" id="CHEBI:30616"/>
    </ligand>
</feature>
<feature type="binding site" evidence="1">
    <location>
        <begin position="124"/>
        <end position="130"/>
    </location>
    <ligand>
        <name>ATP</name>
        <dbReference type="ChEBI" id="CHEBI:30616"/>
    </ligand>
</feature>
<feature type="site" description="Transition state stabilizer" evidence="1">
    <location>
        <position position="18"/>
    </location>
</feature>